<feature type="chain" id="PRO_1000213917" description="Acyl carrier protein">
    <location>
        <begin position="1"/>
        <end position="86"/>
    </location>
</feature>
<feature type="domain" description="Carrier" evidence="2">
    <location>
        <begin position="10"/>
        <end position="85"/>
    </location>
</feature>
<feature type="modified residue" description="O-(pantetheine 4'-phosphoryl)serine" evidence="2">
    <location>
        <position position="45"/>
    </location>
</feature>
<accession>C3PLP2</accession>
<comment type="function">
    <text evidence="1">Carrier of the growing fatty acid chain in fatty acid biosynthesis.</text>
</comment>
<comment type="pathway">
    <text evidence="1">Lipid metabolism; fatty acid biosynthesis.</text>
</comment>
<comment type="subcellular location">
    <subcellularLocation>
        <location evidence="1">Cytoplasm</location>
    </subcellularLocation>
</comment>
<comment type="PTM">
    <text evidence="1">4'-phosphopantetheine is transferred from CoA to a specific serine of apo-ACP by AcpS. This modification is essential for activity because fatty acids are bound in thioester linkage to the sulfhydryl of the prosthetic group.</text>
</comment>
<comment type="similarity">
    <text evidence="1">Belongs to the acyl carrier protein (ACP) family.</text>
</comment>
<reference key="1">
    <citation type="journal article" date="2009" name="BMC Genomics">
        <title>Analysis of the Rickettsia africae genome reveals that virulence acquisition in Rickettsia species may be explained by genome reduction.</title>
        <authorList>
            <person name="Fournier P.-E."/>
            <person name="El Karkouri K."/>
            <person name="Leroy Q."/>
            <person name="Robert C."/>
            <person name="Giumelli B."/>
            <person name="Renesto P."/>
            <person name="Socolovschi C."/>
            <person name="Parola P."/>
            <person name="Audic S."/>
            <person name="Raoult D."/>
        </authorList>
    </citation>
    <scope>NUCLEOTIDE SEQUENCE [LARGE SCALE GENOMIC DNA]</scope>
    <source>
        <strain>ESF-5</strain>
    </source>
</reference>
<organism>
    <name type="scientific">Rickettsia africae (strain ESF-5)</name>
    <dbReference type="NCBI Taxonomy" id="347255"/>
    <lineage>
        <taxon>Bacteria</taxon>
        <taxon>Pseudomonadati</taxon>
        <taxon>Pseudomonadota</taxon>
        <taxon>Alphaproteobacteria</taxon>
        <taxon>Rickettsiales</taxon>
        <taxon>Rickettsiaceae</taxon>
        <taxon>Rickettsieae</taxon>
        <taxon>Rickettsia</taxon>
        <taxon>spotted fever group</taxon>
    </lineage>
</organism>
<keyword id="KW-0963">Cytoplasm</keyword>
<keyword id="KW-0275">Fatty acid biosynthesis</keyword>
<keyword id="KW-0276">Fatty acid metabolism</keyword>
<keyword id="KW-0444">Lipid biosynthesis</keyword>
<keyword id="KW-0443">Lipid metabolism</keyword>
<keyword id="KW-0596">Phosphopantetheine</keyword>
<keyword id="KW-0597">Phosphoprotein</keyword>
<sequence>MEFKIMSTTDKIEQKVIEMVAEKLNKDKSIITTDSRFIEDLKADSLDTVELMMAIEVEYGIDIPDDEATKIKTVSDVIKYIKERQS</sequence>
<gene>
    <name evidence="1" type="primary">acpP</name>
    <name type="ordered locus">RAF_ORF1079</name>
</gene>
<protein>
    <recommendedName>
        <fullName evidence="1">Acyl carrier protein</fullName>
        <shortName evidence="1">ACP</shortName>
    </recommendedName>
</protein>
<evidence type="ECO:0000255" key="1">
    <source>
        <dbReference type="HAMAP-Rule" id="MF_01217"/>
    </source>
</evidence>
<evidence type="ECO:0000255" key="2">
    <source>
        <dbReference type="PROSITE-ProRule" id="PRU00258"/>
    </source>
</evidence>
<proteinExistence type="inferred from homology"/>
<name>ACP_RICAE</name>
<dbReference type="EMBL" id="CP001612">
    <property type="protein sequence ID" value="ACP53882.1"/>
    <property type="molecule type" value="Genomic_DNA"/>
</dbReference>
<dbReference type="BMRB" id="C3PLP2"/>
<dbReference type="SMR" id="C3PLP2"/>
<dbReference type="KEGG" id="raf:RAF_ORF1079"/>
<dbReference type="HOGENOM" id="CLU_108696_5_6_5"/>
<dbReference type="UniPathway" id="UPA00094"/>
<dbReference type="Proteomes" id="UP000002305">
    <property type="component" value="Chromosome"/>
</dbReference>
<dbReference type="GO" id="GO:0005829">
    <property type="term" value="C:cytosol"/>
    <property type="evidence" value="ECO:0007669"/>
    <property type="project" value="TreeGrafter"/>
</dbReference>
<dbReference type="GO" id="GO:0016020">
    <property type="term" value="C:membrane"/>
    <property type="evidence" value="ECO:0007669"/>
    <property type="project" value="GOC"/>
</dbReference>
<dbReference type="GO" id="GO:0000035">
    <property type="term" value="F:acyl binding"/>
    <property type="evidence" value="ECO:0007669"/>
    <property type="project" value="TreeGrafter"/>
</dbReference>
<dbReference type="GO" id="GO:0000036">
    <property type="term" value="F:acyl carrier activity"/>
    <property type="evidence" value="ECO:0007669"/>
    <property type="project" value="UniProtKB-UniRule"/>
</dbReference>
<dbReference type="GO" id="GO:0009245">
    <property type="term" value="P:lipid A biosynthetic process"/>
    <property type="evidence" value="ECO:0007669"/>
    <property type="project" value="TreeGrafter"/>
</dbReference>
<dbReference type="Gene3D" id="1.10.1200.10">
    <property type="entry name" value="ACP-like"/>
    <property type="match status" value="1"/>
</dbReference>
<dbReference type="HAMAP" id="MF_01217">
    <property type="entry name" value="Acyl_carrier"/>
    <property type="match status" value="1"/>
</dbReference>
<dbReference type="InterPro" id="IPR003231">
    <property type="entry name" value="ACP"/>
</dbReference>
<dbReference type="InterPro" id="IPR036736">
    <property type="entry name" value="ACP-like_sf"/>
</dbReference>
<dbReference type="InterPro" id="IPR009081">
    <property type="entry name" value="PP-bd_ACP"/>
</dbReference>
<dbReference type="NCBIfam" id="TIGR00517">
    <property type="entry name" value="acyl_carrier"/>
    <property type="match status" value="1"/>
</dbReference>
<dbReference type="NCBIfam" id="NF002148">
    <property type="entry name" value="PRK00982.1-2"/>
    <property type="match status" value="1"/>
</dbReference>
<dbReference type="NCBIfam" id="NF002150">
    <property type="entry name" value="PRK00982.1-4"/>
    <property type="match status" value="1"/>
</dbReference>
<dbReference type="PANTHER" id="PTHR20863">
    <property type="entry name" value="ACYL CARRIER PROTEIN"/>
    <property type="match status" value="1"/>
</dbReference>
<dbReference type="PANTHER" id="PTHR20863:SF76">
    <property type="entry name" value="CARRIER DOMAIN-CONTAINING PROTEIN"/>
    <property type="match status" value="1"/>
</dbReference>
<dbReference type="Pfam" id="PF00550">
    <property type="entry name" value="PP-binding"/>
    <property type="match status" value="1"/>
</dbReference>
<dbReference type="SUPFAM" id="SSF47336">
    <property type="entry name" value="ACP-like"/>
    <property type="match status" value="1"/>
</dbReference>
<dbReference type="PROSITE" id="PS50075">
    <property type="entry name" value="CARRIER"/>
    <property type="match status" value="1"/>
</dbReference>